<reference key="1">
    <citation type="journal article" date="2001" name="Nature">
        <title>Genome sequence of enterohaemorrhagic Escherichia coli O157:H7.</title>
        <authorList>
            <person name="Perna N.T."/>
            <person name="Plunkett G. III"/>
            <person name="Burland V."/>
            <person name="Mau B."/>
            <person name="Glasner J.D."/>
            <person name="Rose D.J."/>
            <person name="Mayhew G.F."/>
            <person name="Evans P.S."/>
            <person name="Gregor J."/>
            <person name="Kirkpatrick H.A."/>
            <person name="Posfai G."/>
            <person name="Hackett J."/>
            <person name="Klink S."/>
            <person name="Boutin A."/>
            <person name="Shao Y."/>
            <person name="Miller L."/>
            <person name="Grotbeck E.J."/>
            <person name="Davis N.W."/>
            <person name="Lim A."/>
            <person name="Dimalanta E.T."/>
            <person name="Potamousis K."/>
            <person name="Apodaca J."/>
            <person name="Anantharaman T.S."/>
            <person name="Lin J."/>
            <person name="Yen G."/>
            <person name="Schwartz D.C."/>
            <person name="Welch R.A."/>
            <person name="Blattner F.R."/>
        </authorList>
    </citation>
    <scope>NUCLEOTIDE SEQUENCE [LARGE SCALE GENOMIC DNA]</scope>
    <source>
        <strain>O157:H7 / EDL933 / ATCC 700927 / EHEC</strain>
    </source>
</reference>
<reference key="2">
    <citation type="journal article" date="2001" name="DNA Res.">
        <title>Complete genome sequence of enterohemorrhagic Escherichia coli O157:H7 and genomic comparison with a laboratory strain K-12.</title>
        <authorList>
            <person name="Hayashi T."/>
            <person name="Makino K."/>
            <person name="Ohnishi M."/>
            <person name="Kurokawa K."/>
            <person name="Ishii K."/>
            <person name="Yokoyama K."/>
            <person name="Han C.-G."/>
            <person name="Ohtsubo E."/>
            <person name="Nakayama K."/>
            <person name="Murata T."/>
            <person name="Tanaka M."/>
            <person name="Tobe T."/>
            <person name="Iida T."/>
            <person name="Takami H."/>
            <person name="Honda T."/>
            <person name="Sasakawa C."/>
            <person name="Ogasawara N."/>
            <person name="Yasunaga T."/>
            <person name="Kuhara S."/>
            <person name="Shiba T."/>
            <person name="Hattori M."/>
            <person name="Shinagawa H."/>
        </authorList>
    </citation>
    <scope>NUCLEOTIDE SEQUENCE [LARGE SCALE GENOMIC DNA]</scope>
    <source>
        <strain>O157:H7 / Sakai / RIMD 0509952 / EHEC</strain>
    </source>
</reference>
<name>HOKD_ECO57</name>
<proteinExistence type="inferred from homology"/>
<sequence>MKQQKAMLIALIVICLTVIVTALVTRKDLCEVRIRTGQTEVAVFTAYEPEE</sequence>
<gene>
    <name type="primary">hokD</name>
    <name type="ordered locus">Z3117.1</name>
    <name type="ordered locus">ECs2754</name>
</gene>
<comment type="function">
    <text evidence="1">Toxic component of a type I toxin-antitoxin (TA) system (By similarity). When overexpressed kills cells within minutes; causes collapse of the transmembrane potential and arrest of respiration (By similarity). Its toxic effect is probably neutralized by an antisense antitoxin Sok RNA (By similarity).</text>
</comment>
<comment type="subcellular location">
    <subcellularLocation>
        <location evidence="1">Cell inner membrane</location>
        <topology evidence="3">Single-pass membrane protein</topology>
    </subcellularLocation>
</comment>
<comment type="similarity">
    <text evidence="3">Belongs to the Hok/Gef family.</text>
</comment>
<comment type="sequence caution" evidence="3">
    <conflict type="erroneous initiation">
        <sequence resource="EMBL-CDS" id="BAB36177"/>
    </conflict>
    <text>Extended N-terminus.</text>
</comment>
<accession>P0ACG7</accession>
<accession>P07009</accession>
<accession>P77643</accession>
<accession>Q8X294</accession>
<protein>
    <recommendedName>
        <fullName>Protein HokD</fullName>
    </recommendedName>
</protein>
<evidence type="ECO:0000250" key="1">
    <source>
        <dbReference type="UniProtKB" id="P0ACG4"/>
    </source>
</evidence>
<evidence type="ECO:0000255" key="2"/>
<evidence type="ECO:0000305" key="3"/>
<keyword id="KW-0997">Cell inner membrane</keyword>
<keyword id="KW-1003">Cell membrane</keyword>
<keyword id="KW-0472">Membrane</keyword>
<keyword id="KW-1185">Reference proteome</keyword>
<keyword id="KW-1277">Toxin-antitoxin system</keyword>
<keyword id="KW-0812">Transmembrane</keyword>
<keyword id="KW-1133">Transmembrane helix</keyword>
<organism>
    <name type="scientific">Escherichia coli O157:H7</name>
    <dbReference type="NCBI Taxonomy" id="83334"/>
    <lineage>
        <taxon>Bacteria</taxon>
        <taxon>Pseudomonadati</taxon>
        <taxon>Pseudomonadota</taxon>
        <taxon>Gammaproteobacteria</taxon>
        <taxon>Enterobacterales</taxon>
        <taxon>Enterobacteriaceae</taxon>
        <taxon>Escherichia</taxon>
    </lineage>
</organism>
<feature type="chain" id="PRO_0000199034" description="Protein HokD">
    <location>
        <begin position="1"/>
        <end position="51"/>
    </location>
</feature>
<feature type="transmembrane region" description="Helical" evidence="2">
    <location>
        <begin position="5"/>
        <end position="25"/>
    </location>
</feature>
<dbReference type="EMBL" id="AE005174">
    <property type="status" value="NOT_ANNOTATED_CDS"/>
    <property type="molecule type" value="Genomic_DNA"/>
</dbReference>
<dbReference type="EMBL" id="BA000007">
    <property type="protein sequence ID" value="BAB36177.1"/>
    <property type="status" value="ALT_INIT"/>
    <property type="molecule type" value="Genomic_DNA"/>
</dbReference>
<dbReference type="PIR" id="B90973">
    <property type="entry name" value="B90973"/>
</dbReference>
<dbReference type="RefSeq" id="NP_310781.1">
    <property type="nucleotide sequence ID" value="NC_002695.1"/>
</dbReference>
<dbReference type="RefSeq" id="WP_000813254.1">
    <property type="nucleotide sequence ID" value="NZ_VOAI01000070.1"/>
</dbReference>
<dbReference type="SMR" id="P0ACG7"/>
<dbReference type="STRING" id="155864.Z1342"/>
<dbReference type="GeneID" id="93775336"/>
<dbReference type="KEGG" id="ecs:ECs_2754"/>
<dbReference type="PATRIC" id="fig|386585.9.peg.2889"/>
<dbReference type="HOGENOM" id="CLU_177638_2_0_6"/>
<dbReference type="OMA" id="LRLMIIC"/>
<dbReference type="Proteomes" id="UP000000558">
    <property type="component" value="Chromosome"/>
</dbReference>
<dbReference type="Proteomes" id="UP000002519">
    <property type="component" value="Chromosome"/>
</dbReference>
<dbReference type="GO" id="GO:0005886">
    <property type="term" value="C:plasma membrane"/>
    <property type="evidence" value="ECO:0007669"/>
    <property type="project" value="UniProtKB-SubCell"/>
</dbReference>
<dbReference type="InterPro" id="IPR000021">
    <property type="entry name" value="Hok/gef_toxin"/>
</dbReference>
<dbReference type="InterPro" id="IPR018084">
    <property type="entry name" value="Hok/gef_toxin_CS"/>
</dbReference>
<dbReference type="Pfam" id="PF01848">
    <property type="entry name" value="HOK_GEF"/>
    <property type="match status" value="1"/>
</dbReference>
<dbReference type="PRINTS" id="PR00281">
    <property type="entry name" value="HOKGEFTOXIC"/>
</dbReference>
<dbReference type="PROSITE" id="PS00556">
    <property type="entry name" value="HOK_GEF"/>
    <property type="match status" value="1"/>
</dbReference>